<reference key="1">
    <citation type="journal article" date="1995" name="Science">
        <title>Whole-genome random sequencing and assembly of Haemophilus influenzae Rd.</title>
        <authorList>
            <person name="Fleischmann R.D."/>
            <person name="Adams M.D."/>
            <person name="White O."/>
            <person name="Clayton R.A."/>
            <person name="Kirkness E.F."/>
            <person name="Kerlavage A.R."/>
            <person name="Bult C.J."/>
            <person name="Tomb J.-F."/>
            <person name="Dougherty B.A."/>
            <person name="Merrick J.M."/>
            <person name="McKenney K."/>
            <person name="Sutton G.G."/>
            <person name="FitzHugh W."/>
            <person name="Fields C.A."/>
            <person name="Gocayne J.D."/>
            <person name="Scott J.D."/>
            <person name="Shirley R."/>
            <person name="Liu L.-I."/>
            <person name="Glodek A."/>
            <person name="Kelley J.M."/>
            <person name="Weidman J.F."/>
            <person name="Phillips C.A."/>
            <person name="Spriggs T."/>
            <person name="Hedblom E."/>
            <person name="Cotton M.D."/>
            <person name="Utterback T.R."/>
            <person name="Hanna M.C."/>
            <person name="Nguyen D.T."/>
            <person name="Saudek D.M."/>
            <person name="Brandon R.C."/>
            <person name="Fine L.D."/>
            <person name="Fritchman J.L."/>
            <person name="Fuhrmann J.L."/>
            <person name="Geoghagen N.S.M."/>
            <person name="Gnehm C.L."/>
            <person name="McDonald L.A."/>
            <person name="Small K.V."/>
            <person name="Fraser C.M."/>
            <person name="Smith H.O."/>
            <person name="Venter J.C."/>
        </authorList>
    </citation>
    <scope>NUCLEOTIDE SEQUENCE [LARGE SCALE GENOMIC DNA]</scope>
    <source>
        <strain>ATCC 51907 / DSM 11121 / KW20 / Rd</strain>
    </source>
</reference>
<reference key="2">
    <citation type="journal article" date="1994" name="Infect. Immun.">
        <title>Identification of a locus involved in the utilization of iron by Haemophilus influenzae.</title>
        <authorList>
            <person name="Sanders J.D."/>
            <person name="Cope L.D."/>
            <person name="Hansen E.J."/>
        </authorList>
    </citation>
    <scope>NUCLEOTIDE SEQUENCE [GENOMIC DNA]</scope>
    <source>
        <strain>NTHi TN106</strain>
    </source>
</reference>
<reference key="3">
    <citation type="journal article" date="1995" name="J. Biol. Chem.">
        <title>Biochemical characterization of a Haemophilus influenzae periplasmic iron transport operon.</title>
        <authorList>
            <person name="Adhikari P."/>
            <person name="Kirby S.D."/>
            <person name="Nowalk A.J."/>
            <person name="Veraldi K.L."/>
            <person name="Schryvers A.B."/>
            <person name="Mietzner T.A."/>
        </authorList>
    </citation>
    <scope>CHARACTERIZATION</scope>
    <source>
        <strain>DL63 / Serotype B</strain>
    </source>
</reference>
<dbReference type="EC" id="7.2.2.7" evidence="1"/>
<dbReference type="EMBL" id="L42023">
    <property type="protein sequence ID" value="AAC21775.1"/>
    <property type="molecule type" value="Genomic_DNA"/>
</dbReference>
<dbReference type="EMBL" id="S72674">
    <property type="protein sequence ID" value="AAB32112.1"/>
    <property type="molecule type" value="Genomic_DNA"/>
</dbReference>
<dbReference type="PIR" id="E64048">
    <property type="entry name" value="E64048"/>
</dbReference>
<dbReference type="PIR" id="T10888">
    <property type="entry name" value="T10888"/>
</dbReference>
<dbReference type="RefSeq" id="NP_438273.1">
    <property type="nucleotide sequence ID" value="NC_000907.1"/>
</dbReference>
<dbReference type="SMR" id="P44513"/>
<dbReference type="STRING" id="71421.HI_0099"/>
<dbReference type="TCDB" id="3.A.1.10.3">
    <property type="family name" value="the atp-binding cassette (abc) superfamily"/>
</dbReference>
<dbReference type="EnsemblBacteria" id="AAC21775">
    <property type="protein sequence ID" value="AAC21775"/>
    <property type="gene ID" value="HI_0099"/>
</dbReference>
<dbReference type="KEGG" id="hin:HI_0099"/>
<dbReference type="PATRIC" id="fig|71421.8.peg.102"/>
<dbReference type="eggNOG" id="COG3842">
    <property type="taxonomic scope" value="Bacteria"/>
</dbReference>
<dbReference type="HOGENOM" id="CLU_000604_1_1_6"/>
<dbReference type="OrthoDB" id="9802264at2"/>
<dbReference type="PhylomeDB" id="P44513"/>
<dbReference type="Proteomes" id="UP000000579">
    <property type="component" value="Chromosome"/>
</dbReference>
<dbReference type="GO" id="GO:0005886">
    <property type="term" value="C:plasma membrane"/>
    <property type="evidence" value="ECO:0000318"/>
    <property type="project" value="GO_Central"/>
</dbReference>
<dbReference type="GO" id="GO:0015408">
    <property type="term" value="F:ABC-type ferric iron transporter activity"/>
    <property type="evidence" value="ECO:0007669"/>
    <property type="project" value="UniProtKB-EC"/>
</dbReference>
<dbReference type="GO" id="GO:0005524">
    <property type="term" value="F:ATP binding"/>
    <property type="evidence" value="ECO:0007669"/>
    <property type="project" value="UniProtKB-KW"/>
</dbReference>
<dbReference type="GO" id="GO:0016887">
    <property type="term" value="F:ATP hydrolysis activity"/>
    <property type="evidence" value="ECO:0007669"/>
    <property type="project" value="InterPro"/>
</dbReference>
<dbReference type="GO" id="GO:0022857">
    <property type="term" value="F:transmembrane transporter activity"/>
    <property type="evidence" value="ECO:0000318"/>
    <property type="project" value="GO_Central"/>
</dbReference>
<dbReference type="GO" id="GO:0055085">
    <property type="term" value="P:transmembrane transport"/>
    <property type="evidence" value="ECO:0000318"/>
    <property type="project" value="GO_Central"/>
</dbReference>
<dbReference type="CDD" id="cd03259">
    <property type="entry name" value="ABC_Carb_Solutes_like"/>
    <property type="match status" value="1"/>
</dbReference>
<dbReference type="FunFam" id="3.40.50.300:FF:000133">
    <property type="entry name" value="Spermidine/putrescine import ATP-binding protein PotA"/>
    <property type="match status" value="1"/>
</dbReference>
<dbReference type="Gene3D" id="2.40.50.450">
    <property type="match status" value="1"/>
</dbReference>
<dbReference type="Gene3D" id="3.40.50.300">
    <property type="entry name" value="P-loop containing nucleotide triphosphate hydrolases"/>
    <property type="match status" value="1"/>
</dbReference>
<dbReference type="InterPro" id="IPR003593">
    <property type="entry name" value="AAA+_ATPase"/>
</dbReference>
<dbReference type="InterPro" id="IPR050093">
    <property type="entry name" value="ABC_SmlMolc_Importer"/>
</dbReference>
<dbReference type="InterPro" id="IPR003439">
    <property type="entry name" value="ABC_transporter-like_ATP-bd"/>
</dbReference>
<dbReference type="InterPro" id="IPR017871">
    <property type="entry name" value="ABC_transporter-like_CS"/>
</dbReference>
<dbReference type="InterPro" id="IPR015853">
    <property type="entry name" value="ABC_transpr_FbpC"/>
</dbReference>
<dbReference type="InterPro" id="IPR008995">
    <property type="entry name" value="Mo/tungstate-bd_C_term_dom"/>
</dbReference>
<dbReference type="InterPro" id="IPR027417">
    <property type="entry name" value="P-loop_NTPase"/>
</dbReference>
<dbReference type="PANTHER" id="PTHR42781:SF5">
    <property type="entry name" value="PUTRESCINE TRANSPORT ATP-BINDING PROTEIN POTG"/>
    <property type="match status" value="1"/>
</dbReference>
<dbReference type="PANTHER" id="PTHR42781">
    <property type="entry name" value="SPERMIDINE/PUTRESCINE IMPORT ATP-BINDING PROTEIN POTA"/>
    <property type="match status" value="1"/>
</dbReference>
<dbReference type="Pfam" id="PF00005">
    <property type="entry name" value="ABC_tran"/>
    <property type="match status" value="1"/>
</dbReference>
<dbReference type="SMART" id="SM00382">
    <property type="entry name" value="AAA"/>
    <property type="match status" value="1"/>
</dbReference>
<dbReference type="SUPFAM" id="SSF50331">
    <property type="entry name" value="MOP-like"/>
    <property type="match status" value="1"/>
</dbReference>
<dbReference type="SUPFAM" id="SSF52540">
    <property type="entry name" value="P-loop containing nucleoside triphosphate hydrolases"/>
    <property type="match status" value="1"/>
</dbReference>
<dbReference type="PROSITE" id="PS00211">
    <property type="entry name" value="ABC_TRANSPORTER_1"/>
    <property type="match status" value="1"/>
</dbReference>
<dbReference type="PROSITE" id="PS50893">
    <property type="entry name" value="ABC_TRANSPORTER_2"/>
    <property type="match status" value="1"/>
</dbReference>
<dbReference type="PROSITE" id="PS51242">
    <property type="entry name" value="FBPC"/>
    <property type="match status" value="1"/>
</dbReference>
<feature type="chain" id="PRO_0000092353" description="Fe(3+) ions import ATP-binding protein FbpC 2">
    <location>
        <begin position="1"/>
        <end position="356"/>
    </location>
</feature>
<feature type="domain" description="ABC transporter" evidence="1">
    <location>
        <begin position="12"/>
        <end position="246"/>
    </location>
</feature>
<feature type="binding site" evidence="1">
    <location>
        <begin position="44"/>
        <end position="51"/>
    </location>
    <ligand>
        <name>ATP</name>
        <dbReference type="ChEBI" id="CHEBI:30616"/>
    </ligand>
</feature>
<feature type="sequence variant" description="In strain: NTHi TN106.">
    <original>S</original>
    <variation>A</variation>
    <location>
        <position position="45"/>
    </location>
</feature>
<feature type="sequence variant" description="In strain: NTHi TN106.">
    <original>V</original>
    <variation>I</variation>
    <location>
        <position position="97"/>
    </location>
</feature>
<feature type="sequence variant" description="In strain: NTHi TN106.">
    <original>S</original>
    <variation>A</variation>
    <location>
        <position position="209"/>
    </location>
</feature>
<feature type="sequence variant" description="In strain: NTHi TN106.">
    <original>R</original>
    <variation>K</variation>
    <location>
        <position position="350"/>
    </location>
</feature>
<feature type="sequence variant" description="In strain: NTHi TN106.">
    <original>S</original>
    <variation>A</variation>
    <location>
        <position position="356"/>
    </location>
</feature>
<organism>
    <name type="scientific">Haemophilus influenzae (strain ATCC 51907 / DSM 11121 / KW20 / Rd)</name>
    <dbReference type="NCBI Taxonomy" id="71421"/>
    <lineage>
        <taxon>Bacteria</taxon>
        <taxon>Pseudomonadati</taxon>
        <taxon>Pseudomonadota</taxon>
        <taxon>Gammaproteobacteria</taxon>
        <taxon>Pasteurellales</taxon>
        <taxon>Pasteurellaceae</taxon>
        <taxon>Haemophilus</taxon>
    </lineage>
</organism>
<protein>
    <recommendedName>
        <fullName evidence="1">Fe(3+) ions import ATP-binding protein FbpC 2</fullName>
        <ecNumber evidence="1">7.2.2.7</ecNumber>
    </recommendedName>
</protein>
<accession>P44513</accession>
<accession>Q53441</accession>
<proteinExistence type="evidence at protein level"/>
<name>FBPC2_HAEIN</name>
<keyword id="KW-0067">ATP-binding</keyword>
<keyword id="KW-0997">Cell inner membrane</keyword>
<keyword id="KW-1003">Cell membrane</keyword>
<keyword id="KW-0406">Ion transport</keyword>
<keyword id="KW-0408">Iron</keyword>
<keyword id="KW-0410">Iron transport</keyword>
<keyword id="KW-0472">Membrane</keyword>
<keyword id="KW-0547">Nucleotide-binding</keyword>
<keyword id="KW-1185">Reference proteome</keyword>
<keyword id="KW-1278">Translocase</keyword>
<keyword id="KW-0813">Transport</keyword>
<sequence>MRLNKMINNPLLTVKNLNKFFNEQQVLHDISFSLQRGEILFLLGSSGCGKTTLLRAIAGFEQPSNGEIWLKERLIFGENFNLPTQQRHLGYVVQEGVLFPHLNVYRNIAYGLGNGKGKNSEEKTRIEQIMQLTGIFELADRFPHQLSGGQQQRVALARALAPNPELILLDEPFSALDEHLRQQIRQEMLQALRQSGASAIFVTHDRDESLRYADKIAIIQQGKILQIDTPRTLYWSPNHLETAKFMGESIVLPANLLDENTAQCQLGNIPIKNKSISQNQGRILLRPEQFSLFKTSENPTALFNGQIKQIEFKGKITSIQIEINGYAIWIENVISPDLSIGDNLPVYLHRKGLFYS</sequence>
<gene>
    <name evidence="1" type="primary">fbpC2</name>
    <name type="synonym">hitC</name>
    <name type="ordered locus">HI_0099</name>
</gene>
<comment type="function">
    <text evidence="1">Part of the ABC transporter complex FbpABC involved in Fe(3+) ions import. Responsible for energy coupling to the transport system.</text>
</comment>
<comment type="catalytic activity">
    <reaction evidence="1">
        <text>Fe(3+)(out) + ATP + H2O = Fe(3+)(in) + ADP + phosphate + H(+)</text>
        <dbReference type="Rhea" id="RHEA:12332"/>
        <dbReference type="ChEBI" id="CHEBI:15377"/>
        <dbReference type="ChEBI" id="CHEBI:15378"/>
        <dbReference type="ChEBI" id="CHEBI:29034"/>
        <dbReference type="ChEBI" id="CHEBI:30616"/>
        <dbReference type="ChEBI" id="CHEBI:43474"/>
        <dbReference type="ChEBI" id="CHEBI:456216"/>
        <dbReference type="EC" id="7.2.2.7"/>
    </reaction>
</comment>
<comment type="subunit">
    <text evidence="1">The complex is composed of two ATP-binding proteins (FbpC), two transmembrane proteins (FbpB) and a solute-binding protein (FbpA).</text>
</comment>
<comment type="subcellular location">
    <subcellularLocation>
        <location evidence="1">Cell inner membrane</location>
        <topology evidence="1">Peripheral membrane protein</topology>
    </subcellularLocation>
</comment>
<comment type="similarity">
    <text evidence="1">Belongs to the ABC transporter superfamily. Fe(3+) ion importer (TC 3.A.1.10) family.</text>
</comment>
<evidence type="ECO:0000255" key="1">
    <source>
        <dbReference type="HAMAP-Rule" id="MF_01706"/>
    </source>
</evidence>